<evidence type="ECO:0000255" key="1">
    <source>
        <dbReference type="HAMAP-Rule" id="MF_00720"/>
    </source>
</evidence>
<organism>
    <name type="scientific">Erwinia tasmaniensis (strain DSM 17950 / CFBP 7177 / CIP 109463 / NCPPB 4357 / Et1/99)</name>
    <dbReference type="NCBI Taxonomy" id="465817"/>
    <lineage>
        <taxon>Bacteria</taxon>
        <taxon>Pseudomonadati</taxon>
        <taxon>Pseudomonadota</taxon>
        <taxon>Gammaproteobacteria</taxon>
        <taxon>Enterobacterales</taxon>
        <taxon>Erwiniaceae</taxon>
        <taxon>Erwinia</taxon>
    </lineage>
</organism>
<sequence>MTANRLTLSGTVCKAPMRKVSPSGIPHCQFVLEHRSQQVEAGFNRQVWCRMPVIISGKAHQAITQSITVGTQLTVQGFICSHQGRNGLNKMVLHAEQIELIDSGD</sequence>
<name>PRIB_ERWT9</name>
<keyword id="KW-0235">DNA replication</keyword>
<keyword id="KW-0238">DNA-binding</keyword>
<keyword id="KW-0639">Primosome</keyword>
<keyword id="KW-1185">Reference proteome</keyword>
<gene>
    <name evidence="1" type="primary">priB</name>
    <name type="ordered locus">ETA_29540</name>
</gene>
<reference key="1">
    <citation type="journal article" date="2008" name="Environ. Microbiol.">
        <title>The genome of Erwinia tasmaniensis strain Et1/99, a non-pathogenic bacterium in the genus Erwinia.</title>
        <authorList>
            <person name="Kube M."/>
            <person name="Migdoll A.M."/>
            <person name="Mueller I."/>
            <person name="Kuhl H."/>
            <person name="Beck A."/>
            <person name="Reinhardt R."/>
            <person name="Geider K."/>
        </authorList>
    </citation>
    <scope>NUCLEOTIDE SEQUENCE [LARGE SCALE GENOMIC DNA]</scope>
    <source>
        <strain>DSM 17950 / CFBP 7177 / CIP 109463 / NCPPB 4357 / Et1/99</strain>
    </source>
</reference>
<comment type="function">
    <text evidence="1">Involved in the restart of stalled replication forks, which reloads the replicative helicase on sites other than the origin of replication; the PriA-PriB pathway is the major replication restart pathway. During primosome assembly it facilitates complex formation between PriA and DnaT on DNA; stabilizes PriA on DNA. Stimulates the DNA unwinding activity of PriA helicase.</text>
</comment>
<comment type="subunit">
    <text evidence="1">Homodimer. Interacts with PriA and DnaT. Component of the replication restart primosome. Primosome assembly occurs via a 'hand-off' mechanism. PriA binds to replication forks, subsequently PriB then DnaT bind; DnaT then displaces ssDNA to generate the helicase loading substrate.</text>
</comment>
<comment type="similarity">
    <text evidence="1">Belongs to the PriB family.</text>
</comment>
<accession>B2VCW0</accession>
<feature type="chain" id="PRO_1000132623" description="Replication restart protein PriB">
    <location>
        <begin position="1"/>
        <end position="105"/>
    </location>
</feature>
<feature type="domain" description="SSB" evidence="1">
    <location>
        <begin position="1"/>
        <end position="102"/>
    </location>
</feature>
<proteinExistence type="inferred from homology"/>
<protein>
    <recommendedName>
        <fullName evidence="1">Replication restart protein PriB</fullName>
    </recommendedName>
</protein>
<dbReference type="EMBL" id="CU468135">
    <property type="protein sequence ID" value="CAO98000.1"/>
    <property type="molecule type" value="Genomic_DNA"/>
</dbReference>
<dbReference type="RefSeq" id="WP_012442653.1">
    <property type="nucleotide sequence ID" value="NC_010694.1"/>
</dbReference>
<dbReference type="SMR" id="B2VCW0"/>
<dbReference type="STRING" id="465817.ETA_29540"/>
<dbReference type="KEGG" id="eta:ETA_29540"/>
<dbReference type="eggNOG" id="COG2965">
    <property type="taxonomic scope" value="Bacteria"/>
</dbReference>
<dbReference type="HOGENOM" id="CLU_166075_0_0_6"/>
<dbReference type="OrthoDB" id="9180733at2"/>
<dbReference type="Proteomes" id="UP000001726">
    <property type="component" value="Chromosome"/>
</dbReference>
<dbReference type="GO" id="GO:1990077">
    <property type="term" value="C:primosome complex"/>
    <property type="evidence" value="ECO:0007669"/>
    <property type="project" value="UniProtKB-KW"/>
</dbReference>
<dbReference type="GO" id="GO:0003697">
    <property type="term" value="F:single-stranded DNA binding"/>
    <property type="evidence" value="ECO:0007669"/>
    <property type="project" value="UniProtKB-UniRule"/>
</dbReference>
<dbReference type="GO" id="GO:0006269">
    <property type="term" value="P:DNA replication, synthesis of primer"/>
    <property type="evidence" value="ECO:0007669"/>
    <property type="project" value="UniProtKB-KW"/>
</dbReference>
<dbReference type="Gene3D" id="2.40.50.140">
    <property type="entry name" value="Nucleic acid-binding proteins"/>
    <property type="match status" value="1"/>
</dbReference>
<dbReference type="HAMAP" id="MF_00720">
    <property type="entry name" value="PriB"/>
    <property type="match status" value="1"/>
</dbReference>
<dbReference type="InterPro" id="IPR012340">
    <property type="entry name" value="NA-bd_OB-fold"/>
</dbReference>
<dbReference type="InterPro" id="IPR000424">
    <property type="entry name" value="Primosome_PriB/ssb"/>
</dbReference>
<dbReference type="InterPro" id="IPR023646">
    <property type="entry name" value="Prisomal_replication_PriB"/>
</dbReference>
<dbReference type="NCBIfam" id="TIGR04418">
    <property type="entry name" value="PriB_gamma"/>
    <property type="match status" value="1"/>
</dbReference>
<dbReference type="Pfam" id="PF22657">
    <property type="entry name" value="SSB_1"/>
    <property type="match status" value="1"/>
</dbReference>
<dbReference type="PIRSF" id="PIRSF003135">
    <property type="entry name" value="Primosomal_n"/>
    <property type="match status" value="1"/>
</dbReference>
<dbReference type="SUPFAM" id="SSF50249">
    <property type="entry name" value="Nucleic acid-binding proteins"/>
    <property type="match status" value="1"/>
</dbReference>
<dbReference type="PROSITE" id="PS50935">
    <property type="entry name" value="SSB"/>
    <property type="match status" value="1"/>
</dbReference>